<gene>
    <name type="primary">SH</name>
</gene>
<sequence>MEPLKVSGSGGIPMKTRLNIILEKSINKILIILGLLLIASTVITITLTVEYIRVENELQLCKMGAEVAKTTLEPPAQPTKTTPTLTSTRSTTATFKTRPVSRTNHHTNPSCWREEEKCQNITAKWSNCFGTFLPVRVNCTVLRELCDEQLGNHTTVQVSKRCTCIYALNWDCSYA</sequence>
<comment type="function">
    <text evidence="3">Viroporin that forms a ion channel probably displaying low ion selectivity. Plays a role in counteracting host innate immunity by inhibiting TLR7/MyD88/TRAF6 signaling and STAT1 phosphorylation, leading to down-regulation of type-I IFN.</text>
</comment>
<comment type="subunit">
    <text evidence="2 3">Homooligomer (By similarity). Interacts with glycoprotein G (By similarity).</text>
</comment>
<comment type="subcellular location">
    <subcellularLocation>
        <location evidence="3">Virion membrane</location>
        <topology evidence="3">Single-pass type II membrane protein</topology>
    </subcellularLocation>
    <subcellularLocation>
        <location evidence="3">Host cell membrane</location>
        <topology evidence="3">Single-pass type II membrane protein</topology>
    </subcellularLocation>
</comment>
<comment type="PTM">
    <text evidence="1">Tyrosine phosphorylated.</text>
</comment>
<comment type="similarity">
    <text evidence="6">Belongs to the metapneumovirus small hydrophobic protein family.</text>
</comment>
<dbReference type="EMBL" id="DQ009484">
    <property type="protein sequence ID" value="AAY81660.1"/>
    <property type="molecule type" value="Viral_cRNA"/>
</dbReference>
<dbReference type="RefSeq" id="YP_443843.1">
    <property type="nucleotide sequence ID" value="NC_007652.1"/>
</dbReference>
<dbReference type="GlyCosmos" id="Q2Y2M0">
    <property type="glycosylation" value="3 sites, No reported glycans"/>
</dbReference>
<dbReference type="Proteomes" id="UP000002471">
    <property type="component" value="Segment"/>
</dbReference>
<dbReference type="GO" id="GO:0020002">
    <property type="term" value="C:host cell plasma membrane"/>
    <property type="evidence" value="ECO:0007669"/>
    <property type="project" value="UniProtKB-SubCell"/>
</dbReference>
<dbReference type="GO" id="GO:0016020">
    <property type="term" value="C:membrane"/>
    <property type="evidence" value="ECO:0007669"/>
    <property type="project" value="UniProtKB-KW"/>
</dbReference>
<dbReference type="GO" id="GO:0055036">
    <property type="term" value="C:virion membrane"/>
    <property type="evidence" value="ECO:0007669"/>
    <property type="project" value="UniProtKB-SubCell"/>
</dbReference>
<dbReference type="GO" id="GO:1902600">
    <property type="term" value="P:proton transmembrane transport"/>
    <property type="evidence" value="ECO:0007669"/>
    <property type="project" value="UniProtKB-KW"/>
</dbReference>
<reference key="1">
    <citation type="journal article" date="2004" name="Avian Dis.">
        <title>Evidence of avian pneumovirus spread beyond Minnesota among wild and domestic birds in central North America.</title>
        <authorList>
            <person name="Bennett R.S."/>
            <person name="Nezworski J."/>
            <person name="Velayudhan B.T."/>
            <person name="Nagaraja K.V."/>
            <person name="Zeman D.H."/>
            <person name="Dyer N."/>
            <person name="Graham T."/>
            <person name="Lauer D.C."/>
            <person name="Njenga M.K."/>
            <person name="Halvorson D.A."/>
        </authorList>
    </citation>
    <scope>NUCLEOTIDE SEQUENCE [GENOMIC RNA]</scope>
</reference>
<reference key="2">
    <citation type="journal article" date="2005" name="J. Virol.">
        <title>A wild goose metapneumovirus containing a large attachment glycoprotein is avirulent but immunoprotective in domestic turkeys.</title>
        <authorList>
            <person name="Bennett R.S."/>
            <person name="LaRue R."/>
            <person name="Shaw D."/>
            <person name="Yu Q."/>
            <person name="Nagaraja K.V."/>
            <person name="Halvorson D.A."/>
            <person name="Njenga M.K."/>
        </authorList>
    </citation>
    <scope>NUCLEOTIDE SEQUENCE [GENOMIC RNA]</scope>
</reference>
<organism>
    <name type="scientific">Avian metapneumovirus (isolate Canada goose/Minnesota/15a/2001)</name>
    <name type="common">AMPV</name>
    <dbReference type="NCBI Taxonomy" id="652954"/>
    <lineage>
        <taxon>Viruses</taxon>
        <taxon>Riboviria</taxon>
        <taxon>Orthornavirae</taxon>
        <taxon>Negarnaviricota</taxon>
        <taxon>Haploviricotina</taxon>
        <taxon>Monjiviricetes</taxon>
        <taxon>Mononegavirales</taxon>
        <taxon>Pneumoviridae</taxon>
        <taxon>Metapneumovirus</taxon>
        <taxon>Metapneumovirus avis</taxon>
    </lineage>
</organism>
<organismHost>
    <name type="scientific">Anser sp.</name>
    <name type="common">goose</name>
    <dbReference type="NCBI Taxonomy" id="8847"/>
</organismHost>
<organismHost>
    <name type="scientific">Meleagris gallopavo</name>
    <name type="common">Wild turkey</name>
    <dbReference type="NCBI Taxonomy" id="9103"/>
</organismHost>
<evidence type="ECO:0000250" key="1"/>
<evidence type="ECO:0000250" key="2">
    <source>
        <dbReference type="UniProtKB" id="P0DOE5"/>
    </source>
</evidence>
<evidence type="ECO:0000250" key="3">
    <source>
        <dbReference type="UniProtKB" id="Q6WB95"/>
    </source>
</evidence>
<evidence type="ECO:0000255" key="4"/>
<evidence type="ECO:0000256" key="5">
    <source>
        <dbReference type="SAM" id="MobiDB-lite"/>
    </source>
</evidence>
<evidence type="ECO:0000305" key="6"/>
<feature type="chain" id="PRO_0000390374" description="Small hydrophobic protein">
    <location>
        <begin position="1"/>
        <end position="175"/>
    </location>
</feature>
<feature type="topological domain" description="Intravirion" evidence="4">
    <location>
        <begin position="1"/>
        <end position="28"/>
    </location>
</feature>
<feature type="transmembrane region" description="Helical; Signal-anchor for type II membrane protein" evidence="4">
    <location>
        <begin position="29"/>
        <end position="49"/>
    </location>
</feature>
<feature type="topological domain" description="Virion surface" evidence="4">
    <location>
        <begin position="50"/>
        <end position="175"/>
    </location>
</feature>
<feature type="region of interest" description="Disordered" evidence="5">
    <location>
        <begin position="73"/>
        <end position="108"/>
    </location>
</feature>
<feature type="compositionally biased region" description="Low complexity" evidence="5">
    <location>
        <begin position="78"/>
        <end position="98"/>
    </location>
</feature>
<feature type="glycosylation site" description="N-linked (GlcNAc...) asparagine; by host" evidence="4">
    <location>
        <position position="120"/>
    </location>
</feature>
<feature type="glycosylation site" description="N-linked (GlcNAc...) asparagine; by host" evidence="4">
    <location>
        <position position="138"/>
    </location>
</feature>
<feature type="glycosylation site" description="N-linked (GlcNAc...) asparagine; by host" evidence="4">
    <location>
        <position position="152"/>
    </location>
</feature>
<name>SH_AMPV1</name>
<accession>Q2Y2M0</accession>
<protein>
    <recommendedName>
        <fullName>Small hydrophobic protein</fullName>
    </recommendedName>
</protein>
<keyword id="KW-0325">Glycoprotein</keyword>
<keyword id="KW-1032">Host cell membrane</keyword>
<keyword id="KW-1043">Host membrane</keyword>
<keyword id="KW-0375">Hydrogen ion transport</keyword>
<keyword id="KW-0406">Ion transport</keyword>
<keyword id="KW-0472">Membrane</keyword>
<keyword id="KW-0597">Phosphoprotein</keyword>
<keyword id="KW-1185">Reference proteome</keyword>
<keyword id="KW-0735">Signal-anchor</keyword>
<keyword id="KW-0812">Transmembrane</keyword>
<keyword id="KW-1133">Transmembrane helix</keyword>
<keyword id="KW-0813">Transport</keyword>
<keyword id="KW-0946">Virion</keyword>
<proteinExistence type="inferred from homology"/>